<dbReference type="EMBL" id="AF020502">
    <property type="protein sequence ID" value="AAB71413.1"/>
    <property type="status" value="ALT_INIT"/>
    <property type="molecule type" value="mRNA"/>
</dbReference>
<dbReference type="EMBL" id="AF014794">
    <property type="protein sequence ID" value="AAC05593.1"/>
    <property type="status" value="ALT_INIT"/>
    <property type="molecule type" value="mRNA"/>
</dbReference>
<dbReference type="EMBL" id="AF012629">
    <property type="protein sequence ID" value="AAB67110.1"/>
    <property type="molecule type" value="mRNA"/>
</dbReference>
<dbReference type="EMBL" id="AF012536">
    <property type="protein sequence ID" value="AAB67104.1"/>
    <property type="molecule type" value="mRNA"/>
</dbReference>
<dbReference type="EMBL" id="AF016267">
    <property type="protein sequence ID" value="AAB81181.1"/>
    <property type="molecule type" value="mRNA"/>
</dbReference>
<dbReference type="EMBL" id="AF033854">
    <property type="protein sequence ID" value="AAB87506.1"/>
    <property type="molecule type" value="mRNA"/>
</dbReference>
<dbReference type="EMBL" id="AY358281">
    <property type="protein sequence ID" value="AAQ88648.1"/>
    <property type="status" value="ALT_INIT"/>
    <property type="molecule type" value="mRNA"/>
</dbReference>
<dbReference type="EMBL" id="CR541857">
    <property type="protein sequence ID" value="CAG46655.1"/>
    <property type="molecule type" value="mRNA"/>
</dbReference>
<dbReference type="EMBL" id="AC107959">
    <property type="status" value="NOT_ANNOTATED_CDS"/>
    <property type="molecule type" value="Genomic_DNA"/>
</dbReference>
<dbReference type="EMBL" id="BC125041">
    <property type="protein sequence ID" value="AAI25042.1"/>
    <property type="molecule type" value="mRNA"/>
</dbReference>
<dbReference type="EMBL" id="BC125042">
    <property type="protein sequence ID" value="AAI25043.1"/>
    <property type="molecule type" value="mRNA"/>
</dbReference>
<dbReference type="CCDS" id="CCDS6037.1"/>
<dbReference type="RefSeq" id="NP_003832.2">
    <property type="nucleotide sequence ID" value="NM_003841.4"/>
</dbReference>
<dbReference type="SMR" id="O14798"/>
<dbReference type="BioGRID" id="114322">
    <property type="interactions" value="102"/>
</dbReference>
<dbReference type="DIP" id="DIP-6242N"/>
<dbReference type="FunCoup" id="O14798">
    <property type="interactions" value="291"/>
</dbReference>
<dbReference type="IntAct" id="O14798">
    <property type="interactions" value="98"/>
</dbReference>
<dbReference type="STRING" id="9606.ENSP00000349324"/>
<dbReference type="GlyCosmos" id="O14798">
    <property type="glycosylation" value="4 sites, 1 glycan"/>
</dbReference>
<dbReference type="GlyGen" id="O14798">
    <property type="glycosylation" value="9 sites, 1 O-linked glycan (1 site)"/>
</dbReference>
<dbReference type="iPTMnet" id="O14798"/>
<dbReference type="PhosphoSitePlus" id="O14798"/>
<dbReference type="BioMuta" id="TNFRSF10C"/>
<dbReference type="MassIVE" id="O14798"/>
<dbReference type="PaxDb" id="9606-ENSP00000349324"/>
<dbReference type="PeptideAtlas" id="O14798"/>
<dbReference type="ProteomicsDB" id="48247"/>
<dbReference type="Antibodypedia" id="9707">
    <property type="antibodies" value="688 antibodies from 38 providers"/>
</dbReference>
<dbReference type="DNASU" id="8794"/>
<dbReference type="Ensembl" id="ENST00000356864.4">
    <property type="protein sequence ID" value="ENSP00000349324.4"/>
    <property type="gene ID" value="ENSG00000173535.15"/>
</dbReference>
<dbReference type="GeneID" id="8794"/>
<dbReference type="KEGG" id="hsa:8794"/>
<dbReference type="MANE-Select" id="ENST00000356864.4">
    <property type="protein sequence ID" value="ENSP00000349324.4"/>
    <property type="RefSeq nucleotide sequence ID" value="NM_003841.5"/>
    <property type="RefSeq protein sequence ID" value="NP_003832.3"/>
</dbReference>
<dbReference type="UCSC" id="uc003xcy.4">
    <property type="organism name" value="human"/>
</dbReference>
<dbReference type="AGR" id="HGNC:11906"/>
<dbReference type="CTD" id="8794"/>
<dbReference type="DisGeNET" id="8794"/>
<dbReference type="GeneCards" id="TNFRSF10C"/>
<dbReference type="HGNC" id="HGNC:11906">
    <property type="gene designation" value="TNFRSF10C"/>
</dbReference>
<dbReference type="HPA" id="ENSG00000173535">
    <property type="expression patterns" value="Tissue enhanced (bone marrow, lymphoid tissue)"/>
</dbReference>
<dbReference type="MIM" id="603613">
    <property type="type" value="gene"/>
</dbReference>
<dbReference type="neXtProt" id="NX_O14798"/>
<dbReference type="OpenTargets" id="ENSG00000173535"/>
<dbReference type="PharmGKB" id="PA36599"/>
<dbReference type="VEuPathDB" id="HostDB:ENSG00000173535"/>
<dbReference type="eggNOG" id="ENOG502RBEC">
    <property type="taxonomic scope" value="Eukaryota"/>
</dbReference>
<dbReference type="GeneTree" id="ENSGT00940000165140"/>
<dbReference type="HOGENOM" id="CLU_930534_0_0_1"/>
<dbReference type="InParanoid" id="O14798"/>
<dbReference type="OMA" id="SSCTMTR"/>
<dbReference type="OrthoDB" id="9417953at2759"/>
<dbReference type="PAN-GO" id="O14798">
    <property type="GO annotations" value="4 GO annotations based on evolutionary models"/>
</dbReference>
<dbReference type="PhylomeDB" id="O14798"/>
<dbReference type="TreeFam" id="TF333916"/>
<dbReference type="PathwayCommons" id="O14798"/>
<dbReference type="Reactome" id="R-HSA-6803211">
    <property type="pathway name" value="TP53 Regulates Transcription of Death Receptors and Ligands"/>
</dbReference>
<dbReference type="SignaLink" id="O14798"/>
<dbReference type="SIGNOR" id="O14798"/>
<dbReference type="BioGRID-ORCS" id="8794">
    <property type="hits" value="11 hits in 1149 CRISPR screens"/>
</dbReference>
<dbReference type="ChiTaRS" id="TNFRSF10C">
    <property type="organism name" value="human"/>
</dbReference>
<dbReference type="GeneWiki" id="TNFRSF10C"/>
<dbReference type="GenomeRNAi" id="8794"/>
<dbReference type="Pharos" id="O14798">
    <property type="development level" value="Tbio"/>
</dbReference>
<dbReference type="PRO" id="PR:O14798"/>
<dbReference type="Proteomes" id="UP000005640">
    <property type="component" value="Chromosome 8"/>
</dbReference>
<dbReference type="RNAct" id="O14798">
    <property type="molecule type" value="protein"/>
</dbReference>
<dbReference type="Bgee" id="ENSG00000173535">
    <property type="expression patterns" value="Expressed in blood and 126 other cell types or tissues"/>
</dbReference>
<dbReference type="ExpressionAtlas" id="O14798">
    <property type="expression patterns" value="baseline and differential"/>
</dbReference>
<dbReference type="GO" id="GO:0009986">
    <property type="term" value="C:cell surface"/>
    <property type="evidence" value="ECO:0000318"/>
    <property type="project" value="GO_Central"/>
</dbReference>
<dbReference type="GO" id="GO:0005886">
    <property type="term" value="C:plasma membrane"/>
    <property type="evidence" value="ECO:0000318"/>
    <property type="project" value="GO_Central"/>
</dbReference>
<dbReference type="GO" id="GO:0098552">
    <property type="term" value="C:side of membrane"/>
    <property type="evidence" value="ECO:0007669"/>
    <property type="project" value="UniProtKB-KW"/>
</dbReference>
<dbReference type="GO" id="GO:0045569">
    <property type="term" value="F:TRAIL binding"/>
    <property type="evidence" value="ECO:0007669"/>
    <property type="project" value="InterPro"/>
</dbReference>
<dbReference type="GO" id="GO:0004888">
    <property type="term" value="F:transmembrane signaling receptor activity"/>
    <property type="evidence" value="ECO:0000304"/>
    <property type="project" value="ProtInc"/>
</dbReference>
<dbReference type="GO" id="GO:0043065">
    <property type="term" value="P:positive regulation of apoptotic process"/>
    <property type="evidence" value="ECO:0000318"/>
    <property type="project" value="GO_Central"/>
</dbReference>
<dbReference type="GO" id="GO:0036462">
    <property type="term" value="P:TRAIL-activated apoptotic signaling pathway"/>
    <property type="evidence" value="ECO:0000318"/>
    <property type="project" value="GO_Central"/>
</dbReference>
<dbReference type="CDD" id="cd10580">
    <property type="entry name" value="TNFRSF10"/>
    <property type="match status" value="1"/>
</dbReference>
<dbReference type="FunFam" id="2.10.50.10:FF:000004">
    <property type="entry name" value="Tumor necrosis factor receptor superfamily member 6"/>
    <property type="match status" value="1"/>
</dbReference>
<dbReference type="Gene3D" id="2.10.50.10">
    <property type="entry name" value="Tumor Necrosis Factor Receptor, subunit A, domain 2"/>
    <property type="match status" value="3"/>
</dbReference>
<dbReference type="InterPro" id="IPR001368">
    <property type="entry name" value="TNFR/NGFR_Cys_rich_reg"/>
</dbReference>
<dbReference type="InterPro" id="IPR020465">
    <property type="entry name" value="TNFR_10"/>
</dbReference>
<dbReference type="InterPro" id="IPR052491">
    <property type="entry name" value="TNFRSF10"/>
</dbReference>
<dbReference type="InterPro" id="IPR034024">
    <property type="entry name" value="TNFRSF10_N"/>
</dbReference>
<dbReference type="PANTHER" id="PTHR46330">
    <property type="entry name" value="TUMOR NECROSIS FACTOR RECEPTOR SUPERFAMILY MEMBER 10B"/>
    <property type="match status" value="1"/>
</dbReference>
<dbReference type="PANTHER" id="PTHR46330:SF13">
    <property type="entry name" value="TUMOR NECROSIS FACTOR RECEPTOR SUPERFAMILY MEMBER 10C"/>
    <property type="match status" value="1"/>
</dbReference>
<dbReference type="Pfam" id="PF00020">
    <property type="entry name" value="TNFR_c6"/>
    <property type="match status" value="2"/>
</dbReference>
<dbReference type="PRINTS" id="PR01956">
    <property type="entry name" value="TNFACTORR10"/>
</dbReference>
<dbReference type="SMART" id="SM00208">
    <property type="entry name" value="TNFR"/>
    <property type="match status" value="2"/>
</dbReference>
<dbReference type="SUPFAM" id="SSF57586">
    <property type="entry name" value="TNF receptor-like"/>
    <property type="match status" value="3"/>
</dbReference>
<dbReference type="PROSITE" id="PS00652">
    <property type="entry name" value="TNFR_NGFR_1"/>
    <property type="match status" value="2"/>
</dbReference>
<dbReference type="PROSITE" id="PS50050">
    <property type="entry name" value="TNFR_NGFR_2"/>
    <property type="match status" value="2"/>
</dbReference>
<keyword id="KW-0053">Apoptosis</keyword>
<keyword id="KW-1003">Cell membrane</keyword>
<keyword id="KW-0903">Direct protein sequencing</keyword>
<keyword id="KW-1015">Disulfide bond</keyword>
<keyword id="KW-0325">Glycoprotein</keyword>
<keyword id="KW-0336">GPI-anchor</keyword>
<keyword id="KW-0449">Lipoprotein</keyword>
<keyword id="KW-0472">Membrane</keyword>
<keyword id="KW-1267">Proteomics identification</keyword>
<keyword id="KW-0675">Receptor</keyword>
<keyword id="KW-1185">Reference proteome</keyword>
<keyword id="KW-0677">Repeat</keyword>
<keyword id="KW-0732">Signal</keyword>
<reference key="1">
    <citation type="journal article" date="1997" name="J. Biol. Chem.">
        <title>Identification and molecular cloning of two novel receptors for the cytotoxic ligand TRAIL.</title>
        <authorList>
            <person name="MacFarlane M."/>
            <person name="Ahmad M."/>
            <person name="Srinivasula S.M."/>
            <person name="Fernandes-Alnemri T."/>
            <person name="Cohen G.M."/>
            <person name="Alnemri E.S."/>
        </authorList>
    </citation>
    <scope>NUCLEOTIDE SEQUENCE [MRNA]</scope>
    <scope>VARIANT THR-229</scope>
</reference>
<reference key="2">
    <citation type="journal article" date="1997" name="J. Exp. Med.">
        <title>Cloning and characterization of TRAIL-R3, a novel member of the emerging TRAIL receptor family.</title>
        <authorList>
            <person name="Degli-Esposti M.A."/>
            <person name="Smolak P.J."/>
            <person name="Walczak H."/>
            <person name="Waugh J."/>
            <person name="Huang C.-P."/>
            <person name="DuBose R.F."/>
            <person name="Goodwin R.G."/>
            <person name="Smith C.A."/>
        </authorList>
    </citation>
    <scope>NUCLEOTIDE SEQUENCE [MRNA]</scope>
    <scope>CHARACTERIZATION</scope>
    <scope>VARIANT THR-229</scope>
    <source>
        <tissue>Foreskin fibroblast</tissue>
    </source>
</reference>
<reference key="3">
    <citation type="journal article" date="1997" name="Science">
        <title>An antagonist decoy receptor and a death domain-containing receptor for TRAIL.</title>
        <authorList>
            <person name="Pan G."/>
            <person name="Ni J."/>
            <person name="Wei Y.-F."/>
            <person name="Yu G.-L."/>
            <person name="Gentz R."/>
            <person name="Dixit V.M."/>
        </authorList>
    </citation>
    <scope>NUCLEOTIDE SEQUENCE [MRNA]</scope>
    <scope>VARIANT THR-229</scope>
</reference>
<reference key="4">
    <citation type="journal article" date="1997" name="Science">
        <title>Control of TRAIL-induced apoptosis by a family of signaling and decoy receptors.</title>
        <authorList>
            <person name="Sheridan J.P."/>
            <person name="Marsters S.A."/>
            <person name="Pitti R.M."/>
            <person name="Gurney A."/>
            <person name="Skubatch M."/>
            <person name="Baldwin D.T."/>
            <person name="Ramakrishnan L."/>
            <person name="Gray C.L."/>
            <person name="Baker K."/>
            <person name="Wood W.I."/>
            <person name="Goddard A.D."/>
            <person name="Godowski P.J."/>
            <person name="Ashkenazi A."/>
        </authorList>
    </citation>
    <scope>NUCLEOTIDE SEQUENCE [MRNA]</scope>
    <scope>PROTEIN SEQUENCE OF N-TERMINUS</scope>
    <scope>VARIANT THR-229</scope>
</reference>
<reference key="5">
    <citation type="journal article" date="1997" name="FEBS Lett.">
        <title>Characterization of two receptors for TRAIL.</title>
        <authorList>
            <person name="Schneider P."/>
            <person name="Bodmer J.-L."/>
            <person name="Thome M."/>
            <person name="Hofmann K."/>
            <person name="Holler N."/>
            <person name="Tschopp J."/>
        </authorList>
    </citation>
    <scope>NUCLEOTIDE SEQUENCE [MRNA]</scope>
    <scope>CHARACTERIZATION</scope>
    <scope>VARIANT THR-229</scope>
    <source>
        <tissue>Liver</tissue>
        <tissue>Spleen</tissue>
    </source>
</reference>
<reference key="6">
    <citation type="journal article" date="1998" name="J. Immunol.">
        <title>Lymphocyte inhibitor of TRAIL (TNF-related apoptosis-inducing ligand): a new receptor protecting lymphocytes from the death ligand TRAIL.</title>
        <authorList>
            <person name="Mongkolsapaya J."/>
            <person name="Cowper A.E."/>
            <person name="Xu X.-N."/>
            <person name="Morris G."/>
            <person name="McMichael A.J."/>
            <person name="Bell J.I."/>
            <person name="Screaton G.R."/>
        </authorList>
    </citation>
    <scope>NUCLEOTIDE SEQUENCE [MRNA]</scope>
    <scope>VARIANT THR-229</scope>
</reference>
<reference key="7">
    <citation type="journal article" date="2003" name="Genome Res.">
        <title>The secreted protein discovery initiative (SPDI), a large-scale effort to identify novel human secreted and transmembrane proteins: a bioinformatics assessment.</title>
        <authorList>
            <person name="Clark H.F."/>
            <person name="Gurney A.L."/>
            <person name="Abaya E."/>
            <person name="Baker K."/>
            <person name="Baldwin D.T."/>
            <person name="Brush J."/>
            <person name="Chen J."/>
            <person name="Chow B."/>
            <person name="Chui C."/>
            <person name="Crowley C."/>
            <person name="Currell B."/>
            <person name="Deuel B."/>
            <person name="Dowd P."/>
            <person name="Eaton D."/>
            <person name="Foster J.S."/>
            <person name="Grimaldi C."/>
            <person name="Gu Q."/>
            <person name="Hass P.E."/>
            <person name="Heldens S."/>
            <person name="Huang A."/>
            <person name="Kim H.S."/>
            <person name="Klimowski L."/>
            <person name="Jin Y."/>
            <person name="Johnson S."/>
            <person name="Lee J."/>
            <person name="Lewis L."/>
            <person name="Liao D."/>
            <person name="Mark M.R."/>
            <person name="Robbie E."/>
            <person name="Sanchez C."/>
            <person name="Schoenfeld J."/>
            <person name="Seshagiri S."/>
            <person name="Simmons L."/>
            <person name="Singh J."/>
            <person name="Smith V."/>
            <person name="Stinson J."/>
            <person name="Vagts A."/>
            <person name="Vandlen R.L."/>
            <person name="Watanabe C."/>
            <person name="Wieand D."/>
            <person name="Woods K."/>
            <person name="Xie M.-H."/>
            <person name="Yansura D.G."/>
            <person name="Yi S."/>
            <person name="Yu G."/>
            <person name="Yuan J."/>
            <person name="Zhang M."/>
            <person name="Zhang Z."/>
            <person name="Goddard A.D."/>
            <person name="Wood W.I."/>
            <person name="Godowski P.J."/>
            <person name="Gray A.M."/>
        </authorList>
    </citation>
    <scope>NUCLEOTIDE SEQUENCE [LARGE SCALE MRNA]</scope>
    <scope>VARIANT THR-229</scope>
</reference>
<reference key="8">
    <citation type="submission" date="2004-06" db="EMBL/GenBank/DDBJ databases">
        <title>Cloning of human full open reading frames in Gateway(TM) system entry vector (pDONR201).</title>
        <authorList>
            <person name="Ebert L."/>
            <person name="Schick M."/>
            <person name="Neubert P."/>
            <person name="Schatten R."/>
            <person name="Henze S."/>
            <person name="Korn B."/>
        </authorList>
    </citation>
    <scope>NUCLEOTIDE SEQUENCE [LARGE SCALE MRNA]</scope>
</reference>
<reference key="9">
    <citation type="journal article" date="2006" name="Nature">
        <title>DNA sequence and analysis of human chromosome 8.</title>
        <authorList>
            <person name="Nusbaum C."/>
            <person name="Mikkelsen T.S."/>
            <person name="Zody M.C."/>
            <person name="Asakawa S."/>
            <person name="Taudien S."/>
            <person name="Garber M."/>
            <person name="Kodira C.D."/>
            <person name="Schueler M.G."/>
            <person name="Shimizu A."/>
            <person name="Whittaker C.A."/>
            <person name="Chang J.L."/>
            <person name="Cuomo C.A."/>
            <person name="Dewar K."/>
            <person name="FitzGerald M.G."/>
            <person name="Yang X."/>
            <person name="Allen N.R."/>
            <person name="Anderson S."/>
            <person name="Asakawa T."/>
            <person name="Blechschmidt K."/>
            <person name="Bloom T."/>
            <person name="Borowsky M.L."/>
            <person name="Butler J."/>
            <person name="Cook A."/>
            <person name="Corum B."/>
            <person name="DeArellano K."/>
            <person name="DeCaprio D."/>
            <person name="Dooley K.T."/>
            <person name="Dorris L. III"/>
            <person name="Engels R."/>
            <person name="Gloeckner G."/>
            <person name="Hafez N."/>
            <person name="Hagopian D.S."/>
            <person name="Hall J.L."/>
            <person name="Ishikawa S.K."/>
            <person name="Jaffe D.B."/>
            <person name="Kamat A."/>
            <person name="Kudoh J."/>
            <person name="Lehmann R."/>
            <person name="Lokitsang T."/>
            <person name="Macdonald P."/>
            <person name="Major J.E."/>
            <person name="Matthews C.D."/>
            <person name="Mauceli E."/>
            <person name="Menzel U."/>
            <person name="Mihalev A.H."/>
            <person name="Minoshima S."/>
            <person name="Murayama Y."/>
            <person name="Naylor J.W."/>
            <person name="Nicol R."/>
            <person name="Nguyen C."/>
            <person name="O'Leary S.B."/>
            <person name="O'Neill K."/>
            <person name="Parker S.C.J."/>
            <person name="Polley A."/>
            <person name="Raymond C.K."/>
            <person name="Reichwald K."/>
            <person name="Rodriguez J."/>
            <person name="Sasaki T."/>
            <person name="Schilhabel M."/>
            <person name="Siddiqui R."/>
            <person name="Smith C.L."/>
            <person name="Sneddon T.P."/>
            <person name="Talamas J.A."/>
            <person name="Tenzin P."/>
            <person name="Topham K."/>
            <person name="Venkataraman V."/>
            <person name="Wen G."/>
            <person name="Yamazaki S."/>
            <person name="Young S.K."/>
            <person name="Zeng Q."/>
            <person name="Zimmer A.R."/>
            <person name="Rosenthal A."/>
            <person name="Birren B.W."/>
            <person name="Platzer M."/>
            <person name="Shimizu N."/>
            <person name="Lander E.S."/>
        </authorList>
    </citation>
    <scope>NUCLEOTIDE SEQUENCE [LARGE SCALE GENOMIC DNA]</scope>
</reference>
<reference key="10">
    <citation type="journal article" date="2004" name="Genome Res.">
        <title>The status, quality, and expansion of the NIH full-length cDNA project: the Mammalian Gene Collection (MGC).</title>
        <authorList>
            <consortium name="The MGC Project Team"/>
        </authorList>
    </citation>
    <scope>NUCLEOTIDE SEQUENCE [LARGE SCALE MRNA]</scope>
    <scope>VARIANT THR-229</scope>
</reference>
<reference key="11">
    <citation type="journal article" date="2004" name="Protein Sci.">
        <title>Signal peptide prediction based on analysis of experimentally verified cleavage sites.</title>
        <authorList>
            <person name="Zhang Z."/>
            <person name="Henzel W.J."/>
        </authorList>
    </citation>
    <scope>PROTEIN SEQUENCE OF 26-40</scope>
</reference>
<protein>
    <recommendedName>
        <fullName>Tumor necrosis factor receptor superfamily member 10C</fullName>
    </recommendedName>
    <alternativeName>
        <fullName>Antagonist decoy receptor for TRAIL/Apo-2L</fullName>
    </alternativeName>
    <alternativeName>
        <fullName>Decoy TRAIL receptor without death domain</fullName>
    </alternativeName>
    <alternativeName>
        <fullName>Decoy receptor 1</fullName>
        <shortName>DcR1</shortName>
    </alternativeName>
    <alternativeName>
        <fullName>Lymphocyte inhibitor of TRAIL</fullName>
    </alternativeName>
    <alternativeName>
        <fullName>TNF-related apoptosis-inducing ligand receptor 3</fullName>
        <shortName>TRAIL receptor 3</shortName>
        <shortName>TRAIL-R3</shortName>
    </alternativeName>
    <alternativeName>
        <fullName>TRAIL receptor without an intracellular domain</fullName>
    </alternativeName>
    <cdAntigenName>CD263</cdAntigenName>
</protein>
<accession>O14798</accession>
<accession>O14755</accession>
<accession>Q08AS6</accession>
<accession>Q6FH98</accession>
<accession>Q6UXM5</accession>
<feature type="signal peptide" evidence="5 8">
    <location>
        <begin position="1"/>
        <end position="25"/>
    </location>
</feature>
<feature type="chain" id="PRO_0000034582" description="Tumor necrosis factor receptor superfamily member 10C">
    <location>
        <begin position="26"/>
        <end position="236"/>
    </location>
</feature>
<feature type="propeptide" id="PRO_0000034583" description="Removed in mature form" evidence="1">
    <location>
        <begin position="237"/>
        <end position="259"/>
    </location>
</feature>
<feature type="repeat" description="TNFR-Cys 1">
    <location>
        <begin position="29"/>
        <end position="66"/>
    </location>
</feature>
<feature type="repeat" description="TNFR-Cys 2">
    <location>
        <begin position="69"/>
        <end position="109"/>
    </location>
</feature>
<feature type="repeat" description="TNFR-Cys 3">
    <location>
        <begin position="110"/>
        <end position="149"/>
    </location>
</feature>
<feature type="repeat" description="TAPE 1">
    <location>
        <begin position="162"/>
        <end position="176"/>
    </location>
</feature>
<feature type="repeat" description="TAPE 2">
    <location>
        <begin position="177"/>
        <end position="191"/>
    </location>
</feature>
<feature type="repeat" description="TAPE 3">
    <location>
        <begin position="192"/>
        <end position="206"/>
    </location>
</feature>
<feature type="repeat" description="TAPE 4">
    <location>
        <begin position="207"/>
        <end position="221"/>
    </location>
</feature>
<feature type="repeat" description="TAPE 5">
    <location>
        <begin position="222"/>
        <end position="236"/>
    </location>
</feature>
<feature type="region of interest" description="Disordered" evidence="3">
    <location>
        <begin position="30"/>
        <end position="56"/>
    </location>
</feature>
<feature type="region of interest" description="Disordered" evidence="3">
    <location>
        <begin position="160"/>
        <end position="224"/>
    </location>
</feature>
<feature type="compositionally biased region" description="Polar residues" evidence="3">
    <location>
        <begin position="30"/>
        <end position="45"/>
    </location>
</feature>
<feature type="compositionally biased region" description="Low complexity" evidence="3">
    <location>
        <begin position="185"/>
        <end position="217"/>
    </location>
</feature>
<feature type="lipid moiety-binding region" description="GPI-anchor amidated alanine" evidence="1">
    <location>
        <position position="236"/>
    </location>
</feature>
<feature type="glycosylation site" description="N-linked (GlcNAc...) (high mannose) asparagine" evidence="1">
    <location>
        <position position="77"/>
    </location>
</feature>
<feature type="glycosylation site" description="N-linked (GlcNAc...) (high mannose) asparagine" evidence="1">
    <location>
        <position position="140"/>
    </location>
</feature>
<feature type="glycosylation site" description="N-linked (GlcNAc...) (high mannose) asparagine" evidence="1">
    <location>
        <position position="156"/>
    </location>
</feature>
<feature type="disulfide bond" evidence="2">
    <location>
        <begin position="53"/>
        <end position="66"/>
    </location>
</feature>
<feature type="disulfide bond" evidence="2">
    <location>
        <begin position="69"/>
        <end position="85"/>
    </location>
</feature>
<feature type="disulfide bond" evidence="2">
    <location>
        <begin position="88"/>
        <end position="101"/>
    </location>
</feature>
<feature type="disulfide bond" evidence="2">
    <location>
        <begin position="91"/>
        <end position="109"/>
    </location>
</feature>
<feature type="disulfide bond" evidence="2">
    <location>
        <begin position="111"/>
        <end position="125"/>
    </location>
</feature>
<feature type="disulfide bond" evidence="2">
    <location>
        <begin position="128"/>
        <end position="141"/>
    </location>
</feature>
<feature type="disulfide bond" evidence="2">
    <location>
        <begin position="131"/>
        <end position="149"/>
    </location>
</feature>
<feature type="sequence variant" id="VAR_046534" description="In dbSNP:rs12550828.">
    <original>T</original>
    <variation>N</variation>
    <location>
        <position position="199"/>
    </location>
</feature>
<feature type="sequence variant" id="VAR_046535" description="In dbSNP:rs9644063." evidence="4 6 7 8 9 10 11 12">
    <original>I</original>
    <variation>T</variation>
    <location>
        <position position="229"/>
    </location>
</feature>
<feature type="sequence conflict" description="In Ref. 5; AAB81181." evidence="13" ref="5">
    <original>E</original>
    <variation>V</variation>
    <location>
        <position position="119"/>
    </location>
</feature>
<sequence length="259" mass="27407">MARIPKTLKFVVVIVAVLLPVLAYSATTARQEEVPQQTVAPQQQRHSFKGEECPAGSHRSEHTGACNPCTEGVDYTNASNNEPSCFPCTVCKSDQKHKSSCTMTRDTVCQCKEGTFRNENSPEMCRKCSRCPSGEVQVSNCTSWDDIQCVEEFGANATVETPAAEETMNTSPGTPAPAAEETMNTSPGTPAPAAEETMTTSPGTPAPAAEETMTTSPGTPAPAAEETMITSPGTPASSHYLSCTIVGIIVLIVLLIVFV</sequence>
<evidence type="ECO:0000255" key="1"/>
<evidence type="ECO:0000255" key="2">
    <source>
        <dbReference type="PROSITE-ProRule" id="PRU00206"/>
    </source>
</evidence>
<evidence type="ECO:0000256" key="3">
    <source>
        <dbReference type="SAM" id="MobiDB-lite"/>
    </source>
</evidence>
<evidence type="ECO:0000269" key="4">
    <source>
    </source>
</evidence>
<evidence type="ECO:0000269" key="5">
    <source>
    </source>
</evidence>
<evidence type="ECO:0000269" key="6">
    <source>
    </source>
</evidence>
<evidence type="ECO:0000269" key="7">
    <source>
    </source>
</evidence>
<evidence type="ECO:0000269" key="8">
    <source>
    </source>
</evidence>
<evidence type="ECO:0000269" key="9">
    <source>
    </source>
</evidence>
<evidence type="ECO:0000269" key="10">
    <source>
    </source>
</evidence>
<evidence type="ECO:0000269" key="11">
    <source>
    </source>
</evidence>
<evidence type="ECO:0000269" key="12">
    <source>
    </source>
</evidence>
<evidence type="ECO:0000305" key="13"/>
<gene>
    <name type="primary">TNFRSF10C</name>
    <name type="synonym">DCR1</name>
    <name type="synonym">LIT</name>
    <name type="synonym">TRAILR3</name>
    <name type="synonym">TRID</name>
    <name type="ORF">UNQ321/PRO366</name>
</gene>
<proteinExistence type="evidence at protein level"/>
<name>TR10C_HUMAN</name>
<comment type="function">
    <text>Receptor for the cytotoxic ligand TRAIL. Lacks a cytoplasmic death domain and hence is not capable of inducing apoptosis. May protect cells against TRAIL mediated apoptosis by competing with TRAIL-R1 and R2 for binding to the ligand.</text>
</comment>
<comment type="interaction">
    <interactant intactId="EBI-717441">
        <id>O14798</id>
    </interactant>
    <interactant intactId="EBI-13059134">
        <id>Q13520</id>
        <label>AQP6</label>
    </interactant>
    <organismsDiffer>false</organismsDiffer>
    <experiments>3</experiments>
</comment>
<comment type="interaction">
    <interactant intactId="EBI-717441">
        <id>O14798</id>
    </interactant>
    <interactant intactId="EBI-11343438">
        <id>Q3SXY8</id>
        <label>ARL13B</label>
    </interactant>
    <organismsDiffer>false</organismsDiffer>
    <experiments>3</experiments>
</comment>
<comment type="interaction">
    <interactant intactId="EBI-717441">
        <id>O14798</id>
    </interactant>
    <interactant intactId="EBI-12239061">
        <id>Q8WWH4</id>
        <label>ASZ1</label>
    </interactant>
    <organismsDiffer>false</organismsDiffer>
    <experiments>3</experiments>
</comment>
<comment type="interaction">
    <interactant intactId="EBI-717441">
        <id>O14798</id>
    </interactant>
    <interactant intactId="EBI-7797864">
        <id>P11912</id>
        <label>CD79A</label>
    </interactant>
    <organismsDiffer>false</organismsDiffer>
    <experiments>3</experiments>
</comment>
<comment type="interaction">
    <interactant intactId="EBI-717441">
        <id>O14798</id>
    </interactant>
    <interactant intactId="EBI-724524">
        <id>O75208</id>
        <label>COQ9</label>
    </interactant>
    <organismsDiffer>false</organismsDiffer>
    <experiments>3</experiments>
</comment>
<comment type="interaction">
    <interactant intactId="EBI-717441">
        <id>O14798</id>
    </interactant>
    <interactant intactId="EBI-6942903">
        <id>Q96BA8</id>
        <label>CREB3L1</label>
    </interactant>
    <organismsDiffer>false</organismsDiffer>
    <experiments>3</experiments>
</comment>
<comment type="interaction">
    <interactant intactId="EBI-717441">
        <id>O14798</id>
    </interactant>
    <interactant intactId="EBI-1046040">
        <id>P00387</id>
        <label>CYB5R3</label>
    </interactant>
    <organismsDiffer>false</organismsDiffer>
    <experiments>3</experiments>
</comment>
<comment type="interaction">
    <interactant intactId="EBI-717441">
        <id>O14798</id>
    </interactant>
    <interactant intactId="EBI-296550">
        <id>Q96KC8</id>
        <label>DNAJC1</label>
    </interactant>
    <organismsDiffer>false</organismsDiffer>
    <experiments>3</experiments>
</comment>
<comment type="interaction">
    <interactant intactId="EBI-717441">
        <id>O14798</id>
    </interactant>
    <interactant intactId="EBI-781551">
        <id>Q9Y282</id>
        <label>ERGIC3</label>
    </interactant>
    <organismsDiffer>false</organismsDiffer>
    <experiments>3</experiments>
</comment>
<comment type="interaction">
    <interactant intactId="EBI-717441">
        <id>O14798</id>
    </interactant>
    <interactant intactId="EBI-18304435">
        <id>Q5JX71</id>
        <label>FAM209A</label>
    </interactant>
    <organismsDiffer>false</organismsDiffer>
    <experiments>3</experiments>
</comment>
<comment type="interaction">
    <interactant intactId="EBI-717441">
        <id>O14798</id>
    </interactant>
    <interactant intactId="EBI-13345167">
        <id>Q8TDT2</id>
        <label>GPR152</label>
    </interactant>
    <organismsDiffer>false</organismsDiffer>
    <experiments>3</experiments>
</comment>
<comment type="interaction">
    <interactant intactId="EBI-717441">
        <id>O14798</id>
    </interactant>
    <interactant intactId="EBI-2927498">
        <id>O60883</id>
        <label>GPR37L1</label>
    </interactant>
    <organismsDiffer>false</organismsDiffer>
    <experiments>3</experiments>
</comment>
<comment type="interaction">
    <interactant intactId="EBI-717441">
        <id>O14798</id>
    </interactant>
    <interactant intactId="EBI-12017638">
        <id>P48051</id>
        <label>KCNJ6</label>
    </interactant>
    <organismsDiffer>false</organismsDiffer>
    <experiments>3</experiments>
</comment>
<comment type="interaction">
    <interactant intactId="EBI-717441">
        <id>O14798</id>
    </interactant>
    <interactant intactId="EBI-3934936">
        <id>O95279</id>
        <label>KCNK5</label>
    </interactant>
    <organismsDiffer>false</organismsDiffer>
    <experiments>3</experiments>
</comment>
<comment type="interaction">
    <interactant intactId="EBI-717441">
        <id>O14798</id>
    </interactant>
    <interactant intactId="EBI-2691601">
        <id>P10620</id>
        <label>MGST1</label>
    </interactant>
    <organismsDiffer>false</organismsDiffer>
    <experiments>3</experiments>
</comment>
<comment type="interaction">
    <interactant intactId="EBI-717441">
        <id>O14798</id>
    </interactant>
    <interactant intactId="EBI-750085">
        <id>Q9Y676</id>
        <label>MRPS18B</label>
    </interactant>
    <organismsDiffer>false</organismsDiffer>
    <experiments>3</experiments>
</comment>
<comment type="interaction">
    <interactant intactId="EBI-717441">
        <id>O14798</id>
    </interactant>
    <interactant intactId="EBI-716063">
        <id>Q13113</id>
        <label>PDZK1IP1</label>
    </interactant>
    <organismsDiffer>false</organismsDiffer>
    <experiments>3</experiments>
</comment>
<comment type="interaction">
    <interactant intactId="EBI-717441">
        <id>O14798</id>
    </interactant>
    <interactant intactId="EBI-347996">
        <id>O43765</id>
        <label>SGTA</label>
    </interactant>
    <organismsDiffer>false</organismsDiffer>
    <experiments>3</experiments>
</comment>
<comment type="interaction">
    <interactant intactId="EBI-717441">
        <id>O14798</id>
    </interactant>
    <interactant intactId="EBI-13918058">
        <id>O14863</id>
        <label>SLC30A4</label>
    </interactant>
    <organismsDiffer>false</organismsDiffer>
    <experiments>3</experiments>
</comment>
<comment type="interaction">
    <interactant intactId="EBI-717441">
        <id>O14798</id>
    </interactant>
    <interactant intactId="EBI-1211440">
        <id>P27105</id>
        <label>STOM</label>
    </interactant>
    <organismsDiffer>false</organismsDiffer>
    <experiments>3</experiments>
</comment>
<comment type="interaction">
    <interactant intactId="EBI-717441">
        <id>O14798</id>
    </interactant>
    <interactant intactId="EBI-10770179">
        <id>Q96A49</id>
        <label>SYAP1</label>
    </interactant>
    <organismsDiffer>false</organismsDiffer>
    <experiments>3</experiments>
</comment>
<comment type="interaction">
    <interactant intactId="EBI-717441">
        <id>O14798</id>
    </interactant>
    <interactant intactId="EBI-3923061">
        <id>Q96B21</id>
        <label>TMEM45B</label>
    </interactant>
    <organismsDiffer>false</organismsDiffer>
    <experiments>3</experiments>
</comment>
<comment type="interaction">
    <interactant intactId="EBI-717441">
        <id>O14798</id>
    </interactant>
    <interactant intactId="EBI-11742770">
        <id>Q96HE8</id>
        <label>TMEM80</label>
    </interactant>
    <organismsDiffer>false</organismsDiffer>
    <experiments>3</experiments>
</comment>
<comment type="subcellular location">
    <subcellularLocation>
        <location>Cell membrane</location>
        <topology>Lipid-anchor</topology>
        <topology>GPI-anchor</topology>
    </subcellularLocation>
</comment>
<comment type="tissue specificity">
    <text>Higher expression in normal tissues than in tumor cell lines. Highly expressed in peripheral blood lymphocytes, spleen, skeletal muscle, placenta, lung and heart.</text>
</comment>
<comment type="PTM">
    <text>N-glycosylated and O-glycosylated.</text>
</comment>
<comment type="sequence caution" evidence="13">
    <conflict type="erroneous initiation">
        <sequence resource="EMBL-CDS" id="AAB71413"/>
    </conflict>
    <text>Extended N-terminus.</text>
</comment>
<comment type="sequence caution" evidence="13">
    <conflict type="erroneous initiation">
        <sequence resource="EMBL-CDS" id="AAC05593"/>
    </conflict>
    <text>Extended N-terminus.</text>
</comment>
<comment type="sequence caution" evidence="13">
    <conflict type="erroneous initiation">
        <sequence resource="EMBL-CDS" id="AAQ88648"/>
    </conflict>
    <text>Extended N-terminus.</text>
</comment>
<organism>
    <name type="scientific">Homo sapiens</name>
    <name type="common">Human</name>
    <dbReference type="NCBI Taxonomy" id="9606"/>
    <lineage>
        <taxon>Eukaryota</taxon>
        <taxon>Metazoa</taxon>
        <taxon>Chordata</taxon>
        <taxon>Craniata</taxon>
        <taxon>Vertebrata</taxon>
        <taxon>Euteleostomi</taxon>
        <taxon>Mammalia</taxon>
        <taxon>Eutheria</taxon>
        <taxon>Euarchontoglires</taxon>
        <taxon>Primates</taxon>
        <taxon>Haplorrhini</taxon>
        <taxon>Catarrhini</taxon>
        <taxon>Hominidae</taxon>
        <taxon>Homo</taxon>
    </lineage>
</organism>